<evidence type="ECO:0000255" key="1">
    <source>
        <dbReference type="HAMAP-Rule" id="MF_00301"/>
    </source>
</evidence>
<accession>Q57EP5</accession>
<keyword id="KW-0028">Amino-acid biosynthesis</keyword>
<keyword id="KW-0067">ATP-binding</keyword>
<keyword id="KW-0418">Kinase</keyword>
<keyword id="KW-0547">Nucleotide-binding</keyword>
<keyword id="KW-0791">Threonine biosynthesis</keyword>
<keyword id="KW-0808">Transferase</keyword>
<sequence length="326" mass="36645">MAVYTDINEIELGAFLRHYDIGTLTSYKGIAEGVENSNYLLHTSSGSFILTLYEKRTNREDLPFFLGLMQHLAKRGLECPQPVVRNDGAMIGQLAGRPAAIVTFLEGMWMRRPTVAHCEAVGEGLAHMHLAGADFPMRRRNGLTLPDWRPLWNLSRKCADTVERGLVAETEADLDFLEKNWPADLPQGVIHADLFPDNAFFLGDRLSGFIDFYFACTDILAYDVAVCLNAWCFEKDFSYNRTKGAALLRGYTSVRPLSEAEADALLVLARGAAVRFMLTRLYDWLTVPAGSFVVKKDPMEYVRRMRFHRQIESAAEYGLEMQGVAA</sequence>
<dbReference type="EC" id="2.7.1.39" evidence="1"/>
<dbReference type="EMBL" id="AE017223">
    <property type="protein sequence ID" value="AAX73889.1"/>
    <property type="molecule type" value="Genomic_DNA"/>
</dbReference>
<dbReference type="RefSeq" id="WP_002963634.1">
    <property type="nucleotide sequence ID" value="NC_006932.1"/>
</dbReference>
<dbReference type="SMR" id="Q57EP5"/>
<dbReference type="EnsemblBacteria" id="AAX73889">
    <property type="protein sequence ID" value="AAX73889"/>
    <property type="gene ID" value="BruAb1_0498"/>
</dbReference>
<dbReference type="KEGG" id="bmb:BruAb1_0498"/>
<dbReference type="HOGENOM" id="CLU_053300_1_0_5"/>
<dbReference type="UniPathway" id="UPA00050">
    <property type="reaction ID" value="UER00064"/>
</dbReference>
<dbReference type="Proteomes" id="UP000000540">
    <property type="component" value="Chromosome I"/>
</dbReference>
<dbReference type="GO" id="GO:0005524">
    <property type="term" value="F:ATP binding"/>
    <property type="evidence" value="ECO:0007669"/>
    <property type="project" value="UniProtKB-KW"/>
</dbReference>
<dbReference type="GO" id="GO:0004413">
    <property type="term" value="F:homoserine kinase activity"/>
    <property type="evidence" value="ECO:0007669"/>
    <property type="project" value="UniProtKB-UniRule"/>
</dbReference>
<dbReference type="GO" id="GO:0009088">
    <property type="term" value="P:threonine biosynthetic process"/>
    <property type="evidence" value="ECO:0007669"/>
    <property type="project" value="UniProtKB-UniRule"/>
</dbReference>
<dbReference type="CDD" id="cd05153">
    <property type="entry name" value="HomoserineK_II"/>
    <property type="match status" value="1"/>
</dbReference>
<dbReference type="Gene3D" id="3.90.1200.10">
    <property type="match status" value="1"/>
</dbReference>
<dbReference type="Gene3D" id="3.30.200.20">
    <property type="entry name" value="Phosphorylase Kinase, domain 1"/>
    <property type="match status" value="1"/>
</dbReference>
<dbReference type="HAMAP" id="MF_00301">
    <property type="entry name" value="Homoser_kinase_2"/>
    <property type="match status" value="1"/>
</dbReference>
<dbReference type="InterPro" id="IPR002575">
    <property type="entry name" value="Aminoglycoside_PTrfase"/>
</dbReference>
<dbReference type="InterPro" id="IPR005280">
    <property type="entry name" value="Homoserine_kinase_II"/>
</dbReference>
<dbReference type="InterPro" id="IPR011009">
    <property type="entry name" value="Kinase-like_dom_sf"/>
</dbReference>
<dbReference type="InterPro" id="IPR050249">
    <property type="entry name" value="Pseudomonas-type_ThrB"/>
</dbReference>
<dbReference type="NCBIfam" id="NF003558">
    <property type="entry name" value="PRK05231.1"/>
    <property type="match status" value="1"/>
</dbReference>
<dbReference type="NCBIfam" id="TIGR00938">
    <property type="entry name" value="thrB_alt"/>
    <property type="match status" value="1"/>
</dbReference>
<dbReference type="PANTHER" id="PTHR21064:SF6">
    <property type="entry name" value="AMINOGLYCOSIDE PHOSPHOTRANSFERASE DOMAIN-CONTAINING PROTEIN"/>
    <property type="match status" value="1"/>
</dbReference>
<dbReference type="PANTHER" id="PTHR21064">
    <property type="entry name" value="AMINOGLYCOSIDE PHOSPHOTRANSFERASE DOMAIN-CONTAINING PROTEIN-RELATED"/>
    <property type="match status" value="1"/>
</dbReference>
<dbReference type="Pfam" id="PF01636">
    <property type="entry name" value="APH"/>
    <property type="match status" value="1"/>
</dbReference>
<dbReference type="SUPFAM" id="SSF56112">
    <property type="entry name" value="Protein kinase-like (PK-like)"/>
    <property type="match status" value="1"/>
</dbReference>
<organism>
    <name type="scientific">Brucella abortus biovar 1 (strain 9-941)</name>
    <dbReference type="NCBI Taxonomy" id="262698"/>
    <lineage>
        <taxon>Bacteria</taxon>
        <taxon>Pseudomonadati</taxon>
        <taxon>Pseudomonadota</taxon>
        <taxon>Alphaproteobacteria</taxon>
        <taxon>Hyphomicrobiales</taxon>
        <taxon>Brucellaceae</taxon>
        <taxon>Brucella/Ochrobactrum group</taxon>
        <taxon>Brucella</taxon>
    </lineage>
</organism>
<name>KHSE_BRUAB</name>
<comment type="catalytic activity">
    <reaction evidence="1">
        <text>L-homoserine + ATP = O-phospho-L-homoserine + ADP + H(+)</text>
        <dbReference type="Rhea" id="RHEA:13985"/>
        <dbReference type="ChEBI" id="CHEBI:15378"/>
        <dbReference type="ChEBI" id="CHEBI:30616"/>
        <dbReference type="ChEBI" id="CHEBI:57476"/>
        <dbReference type="ChEBI" id="CHEBI:57590"/>
        <dbReference type="ChEBI" id="CHEBI:456216"/>
        <dbReference type="EC" id="2.7.1.39"/>
    </reaction>
</comment>
<comment type="pathway">
    <text evidence="1">Amino-acid biosynthesis; L-threonine biosynthesis; L-threonine from L-aspartate: step 4/5.</text>
</comment>
<comment type="similarity">
    <text evidence="1">Belongs to the pseudomonas-type ThrB family.</text>
</comment>
<proteinExistence type="inferred from homology"/>
<gene>
    <name evidence="1" type="primary">thrB</name>
    <name type="ordered locus">BruAb1_0498</name>
</gene>
<feature type="chain" id="PRO_0000300782" description="Homoserine kinase">
    <location>
        <begin position="1"/>
        <end position="326"/>
    </location>
</feature>
<reference key="1">
    <citation type="journal article" date="2005" name="J. Bacteriol.">
        <title>Completion of the genome sequence of Brucella abortus and comparison to the highly similar genomes of Brucella melitensis and Brucella suis.</title>
        <authorList>
            <person name="Halling S.M."/>
            <person name="Peterson-Burch B.D."/>
            <person name="Bricker B.J."/>
            <person name="Zuerner R.L."/>
            <person name="Qing Z."/>
            <person name="Li L.-L."/>
            <person name="Kapur V."/>
            <person name="Alt D.P."/>
            <person name="Olsen S.C."/>
        </authorList>
    </citation>
    <scope>NUCLEOTIDE SEQUENCE [LARGE SCALE GENOMIC DNA]</scope>
    <source>
        <strain>9-941</strain>
    </source>
</reference>
<protein>
    <recommendedName>
        <fullName evidence="1">Homoserine kinase</fullName>
        <shortName evidence="1">HK</shortName>
        <shortName evidence="1">HSK</shortName>
        <ecNumber evidence="1">2.7.1.39</ecNumber>
    </recommendedName>
</protein>